<organism>
    <name type="scientific">Escherichia coli O127:H6 (strain E2348/69 / EPEC)</name>
    <dbReference type="NCBI Taxonomy" id="574521"/>
    <lineage>
        <taxon>Bacteria</taxon>
        <taxon>Pseudomonadati</taxon>
        <taxon>Pseudomonadota</taxon>
        <taxon>Gammaproteobacteria</taxon>
        <taxon>Enterobacterales</taxon>
        <taxon>Enterobacteriaceae</taxon>
        <taxon>Escherichia</taxon>
    </lineage>
</organism>
<evidence type="ECO:0000250" key="1"/>
<evidence type="ECO:0000255" key="2"/>
<evidence type="ECO:0000305" key="3"/>
<protein>
    <recommendedName>
        <fullName>Tyrosine-protein kinase etk</fullName>
        <ecNumber>2.7.10.-</ecNumber>
    </recommendedName>
</protein>
<gene>
    <name type="primary">etk</name>
    <name type="ordered locus">E2348C_0966</name>
</gene>
<accession>P58764</accession>
<accession>B7UN59</accession>
<comment type="catalytic activity">
    <reaction>
        <text>L-tyrosyl-[protein] + ATP = O-phospho-L-tyrosyl-[protein] + ADP + H(+)</text>
        <dbReference type="Rhea" id="RHEA:10596"/>
        <dbReference type="Rhea" id="RHEA-COMP:10136"/>
        <dbReference type="Rhea" id="RHEA-COMP:20101"/>
        <dbReference type="ChEBI" id="CHEBI:15378"/>
        <dbReference type="ChEBI" id="CHEBI:30616"/>
        <dbReference type="ChEBI" id="CHEBI:46858"/>
        <dbReference type="ChEBI" id="CHEBI:61978"/>
        <dbReference type="ChEBI" id="CHEBI:456216"/>
    </reaction>
</comment>
<comment type="subcellular location">
    <subcellularLocation>
        <location>Cell inner membrane</location>
        <topology>Multi-pass membrane protein</topology>
    </subcellularLocation>
</comment>
<comment type="PTM">
    <text evidence="1">Autophosphorylated. Dephosphorylated by etp (By similarity).</text>
</comment>
<comment type="similarity">
    <text evidence="3">Belongs to the etk/wzc family.</text>
</comment>
<sequence>MTTKNMNTPPGSTQENEIDLLRLVGELWDHRKFIISVTALFTLIAVAYSLLSTPIYQADTLVQVEQKQGNAILSGLSDMIPNSSPESAPEIQLLQSRMILGKTIAELNLRDIVEQKYFPIVGRGWARLTKEKPGELAISWMHIPQLNGQDQQLTLTVGENGHYTLEGEGFTVNGMVGQRLEKDGVALTIADIKAKPGTQFVLSQRTELEAINALQGTFTVSERSKESGMLELTMTGDDPQLITRILNSIANNYLQQNIARQAAQDSQSLEFLQRQLPEVRSELDQAEEKLNVYRQQRDSVDLNLEAKAVLEQIVNVDNQLNELTFREAEISQLYKKDHPTYRALLEKRQTLEQERKRLNKRVSAMPSTQQEVLRLSRDVEAGRAVYLQLLNRQQELSISKSSAIGNVRIIDPAVTQPQPVKPKKALNVVLGFILGLFISVGAVLARAMLRRGVEAPEQLEEHGISVYATIPMSEWLDKRTRLRKKNLFSNQQRHRTKNIPFLAVDNPADSAVEAVRALRTSLHFAMMETENNILMITGATPDSGKTFVSSTLAAVIAQSDQKVLFIDADLRRGYSHNLFTVSNEHGLSEYLAGKDELNKVIQHFGKGGFDVITRGQVPPNPSELLMRDRMRQLLEWANDHYDLVIVDTPPMLAVSDAAVVGRSVGTSLLVARFGLNTAKEVSLSMQRLEQAGVNIKGAILNGVIKRASTAYSYGYNYYGYSYSEKE</sequence>
<proteinExistence type="evidence at protein level"/>
<dbReference type="EC" id="2.7.10.-"/>
<dbReference type="EMBL" id="AJ238695">
    <property type="protein sequence ID" value="CAB43868.1"/>
    <property type="molecule type" value="Genomic_DNA"/>
</dbReference>
<dbReference type="EMBL" id="FM180568">
    <property type="protein sequence ID" value="CAS08514.1"/>
    <property type="molecule type" value="Genomic_DNA"/>
</dbReference>
<dbReference type="RefSeq" id="WP_000208660.1">
    <property type="nucleotide sequence ID" value="NC_011601.1"/>
</dbReference>
<dbReference type="SMR" id="P58764"/>
<dbReference type="KEGG" id="ecg:E2348C_0966"/>
<dbReference type="HOGENOM" id="CLU_009912_0_0_6"/>
<dbReference type="BRENDA" id="2.7.10.1">
    <property type="organism ID" value="2026"/>
</dbReference>
<dbReference type="BRENDA" id="2.7.10.2">
    <property type="organism ID" value="2026"/>
</dbReference>
<dbReference type="Proteomes" id="UP000008205">
    <property type="component" value="Chromosome"/>
</dbReference>
<dbReference type="GO" id="GO:0005886">
    <property type="term" value="C:plasma membrane"/>
    <property type="evidence" value="ECO:0007669"/>
    <property type="project" value="UniProtKB-SubCell"/>
</dbReference>
<dbReference type="GO" id="GO:0005524">
    <property type="term" value="F:ATP binding"/>
    <property type="evidence" value="ECO:0007669"/>
    <property type="project" value="UniProtKB-KW"/>
</dbReference>
<dbReference type="GO" id="GO:0004713">
    <property type="term" value="F:protein tyrosine kinase activity"/>
    <property type="evidence" value="ECO:0007669"/>
    <property type="project" value="UniProtKB-KW"/>
</dbReference>
<dbReference type="CDD" id="cd05387">
    <property type="entry name" value="BY-kinase"/>
    <property type="match status" value="1"/>
</dbReference>
<dbReference type="FunFam" id="3.40.50.300:FF:000527">
    <property type="entry name" value="Tyrosine-protein kinase etk"/>
    <property type="match status" value="1"/>
</dbReference>
<dbReference type="Gene3D" id="3.40.50.300">
    <property type="entry name" value="P-loop containing nucleotide triphosphate hydrolases"/>
    <property type="match status" value="1"/>
</dbReference>
<dbReference type="InterPro" id="IPR025669">
    <property type="entry name" value="AAA_dom"/>
</dbReference>
<dbReference type="InterPro" id="IPR050445">
    <property type="entry name" value="Bact_polysacc_biosynth/exp"/>
</dbReference>
<dbReference type="InterPro" id="IPR032807">
    <property type="entry name" value="GNVR"/>
</dbReference>
<dbReference type="InterPro" id="IPR003856">
    <property type="entry name" value="LPS_length_determ_N_term"/>
</dbReference>
<dbReference type="InterPro" id="IPR027417">
    <property type="entry name" value="P-loop_NTPase"/>
</dbReference>
<dbReference type="InterPro" id="IPR005702">
    <property type="entry name" value="Wzc-like_C"/>
</dbReference>
<dbReference type="NCBIfam" id="TIGR01007">
    <property type="entry name" value="eps_fam"/>
    <property type="match status" value="1"/>
</dbReference>
<dbReference type="NCBIfam" id="NF007350">
    <property type="entry name" value="PRK09841.1"/>
    <property type="match status" value="1"/>
</dbReference>
<dbReference type="PANTHER" id="PTHR32309">
    <property type="entry name" value="TYROSINE-PROTEIN KINASE"/>
    <property type="match status" value="1"/>
</dbReference>
<dbReference type="PANTHER" id="PTHR32309:SF32">
    <property type="entry name" value="TYROSINE-PROTEIN KINASE ETK-RELATED"/>
    <property type="match status" value="1"/>
</dbReference>
<dbReference type="Pfam" id="PF13614">
    <property type="entry name" value="AAA_31"/>
    <property type="match status" value="1"/>
</dbReference>
<dbReference type="Pfam" id="PF13807">
    <property type="entry name" value="GNVR"/>
    <property type="match status" value="1"/>
</dbReference>
<dbReference type="Pfam" id="PF23607">
    <property type="entry name" value="WZC_N"/>
    <property type="match status" value="1"/>
</dbReference>
<dbReference type="Pfam" id="PF02706">
    <property type="entry name" value="Wzz"/>
    <property type="match status" value="1"/>
</dbReference>
<dbReference type="SUPFAM" id="SSF52540">
    <property type="entry name" value="P-loop containing nucleoside triphosphate hydrolases"/>
    <property type="match status" value="1"/>
</dbReference>
<name>ETK_ECO27</name>
<keyword id="KW-0067">ATP-binding</keyword>
<keyword id="KW-0997">Cell inner membrane</keyword>
<keyword id="KW-1003">Cell membrane</keyword>
<keyword id="KW-0903">Direct protein sequencing</keyword>
<keyword id="KW-0418">Kinase</keyword>
<keyword id="KW-0472">Membrane</keyword>
<keyword id="KW-0547">Nucleotide-binding</keyword>
<keyword id="KW-0597">Phosphoprotein</keyword>
<keyword id="KW-1185">Reference proteome</keyword>
<keyword id="KW-0808">Transferase</keyword>
<keyword id="KW-0812">Transmembrane</keyword>
<keyword id="KW-1133">Transmembrane helix</keyword>
<keyword id="KW-0829">Tyrosine-protein kinase</keyword>
<feature type="chain" id="PRO_0000212350" description="Tyrosine-protein kinase etk">
    <location>
        <begin position="1"/>
        <end position="726"/>
    </location>
</feature>
<feature type="topological domain" description="Cytoplasmic" evidence="2">
    <location>
        <begin position="1"/>
        <end position="32"/>
    </location>
</feature>
<feature type="transmembrane region" description="Helical" evidence="2">
    <location>
        <begin position="33"/>
        <end position="53"/>
    </location>
</feature>
<feature type="topological domain" description="Periplasmic" evidence="2">
    <location>
        <begin position="54"/>
        <end position="424"/>
    </location>
</feature>
<feature type="transmembrane region" description="Helical" evidence="2">
    <location>
        <begin position="425"/>
        <end position="445"/>
    </location>
</feature>
<feature type="topological domain" description="Cytoplasmic" evidence="2">
    <location>
        <begin position="446"/>
        <end position="726"/>
    </location>
</feature>
<feature type="sequence conflict" description="In Ref. 1; CAB43868." evidence="3" ref="1">
    <original>Q</original>
    <variation>L</variation>
    <location>
        <position position="92"/>
    </location>
</feature>
<reference key="1">
    <citation type="journal article" date="1999" name="EMBO J.">
        <title>Protein tyrosine kinases in bacterial pathogens are associated with virulence and production of exopolysaccharide.</title>
        <authorList>
            <person name="Ilan O.A."/>
            <person name="Bloch Y."/>
            <person name="Frankel G."/>
            <person name="Ullrich H."/>
            <person name="Geider K."/>
            <person name="Rosenshine I."/>
        </authorList>
    </citation>
    <scope>NUCLEOTIDE SEQUENCE [GENOMIC DNA]</scope>
    <scope>PROTEIN SEQUENCE OF 1-17</scope>
    <scope>CHARACTERIZATION</scope>
</reference>
<reference key="2">
    <citation type="journal article" date="2009" name="J. Bacteriol.">
        <title>Complete genome sequence and comparative genome analysis of enteropathogenic Escherichia coli O127:H6 strain E2348/69.</title>
        <authorList>
            <person name="Iguchi A."/>
            <person name="Thomson N.R."/>
            <person name="Ogura Y."/>
            <person name="Saunders D."/>
            <person name="Ooka T."/>
            <person name="Henderson I.R."/>
            <person name="Harris D."/>
            <person name="Asadulghani M."/>
            <person name="Kurokawa K."/>
            <person name="Dean P."/>
            <person name="Kenny B."/>
            <person name="Quail M.A."/>
            <person name="Thurston S."/>
            <person name="Dougan G."/>
            <person name="Hayashi T."/>
            <person name="Parkhill J."/>
            <person name="Frankel G."/>
        </authorList>
    </citation>
    <scope>NUCLEOTIDE SEQUENCE [LARGE SCALE GENOMIC DNA]</scope>
    <source>
        <strain>E2348/69 / EPEC</strain>
    </source>
</reference>